<gene>
    <name evidence="1" type="primary">sufS</name>
    <name type="ordered locus">SCH_1393</name>
</gene>
<proteinExistence type="inferred from homology"/>
<protein>
    <recommendedName>
        <fullName evidence="1">Cysteine desulfurase</fullName>
        <ecNumber evidence="1">2.8.1.7</ecNumber>
    </recommendedName>
    <alternativeName>
        <fullName evidence="1">Selenocysteine beta-lyase</fullName>
        <shortName evidence="1">SCL</shortName>
    </alternativeName>
    <alternativeName>
        <fullName evidence="1">Selenocysteine lyase</fullName>
        <ecNumber evidence="1">4.4.1.16</ecNumber>
    </alternativeName>
    <alternativeName>
        <fullName evidence="1">Selenocysteine reductase</fullName>
    </alternativeName>
</protein>
<reference key="1">
    <citation type="journal article" date="2005" name="Nucleic Acids Res.">
        <title>The genome sequence of Salmonella enterica serovar Choleraesuis, a highly invasive and resistant zoonotic pathogen.</title>
        <authorList>
            <person name="Chiu C.-H."/>
            <person name="Tang P."/>
            <person name="Chu C."/>
            <person name="Hu S."/>
            <person name="Bao Q."/>
            <person name="Yu J."/>
            <person name="Chou Y.-Y."/>
            <person name="Wang H.-S."/>
            <person name="Lee Y.-S."/>
        </authorList>
    </citation>
    <scope>NUCLEOTIDE SEQUENCE [LARGE SCALE GENOMIC DNA]</scope>
    <source>
        <strain>SC-B67</strain>
    </source>
</reference>
<sequence>MTFPVEKVRADFPILQREVNGLPLAYLDSAASAQKPNQVIDAESAFYRHGYAAVHRGIHTLSAQATESMENVRKQASRFINARSAEELVFVRGTTEGINLVANSWGTENIRAGDNIIISEMEHHANIVPWQMLCERKGAELRVIPLHPDGTLRLETLAALFDDRTRLLAITHVSNVLGTENPLPDMIALARQHGAKVLVDGAQAVMHHVVDVQALDCDFYVFSGHKLYGPTGIGILYVKEALLQEMPPWEGGGSMISTVSLTQGTTWAKAPWRFEAGTPNTGGIIGLGAAIDYVTSLGLDKIGDYEQMLMRYALEQLAQVPDITLYGPAQRLGVIAFNLGKHHAYDVGSFLDNYGIAVRTGHHCAMPLMAWYGVPAMCRASLAMYNTHEEVDRLVAGLTRIHRLLG</sequence>
<accession>Q57PR2</accession>
<dbReference type="EC" id="2.8.1.7" evidence="1"/>
<dbReference type="EC" id="4.4.1.16" evidence="1"/>
<dbReference type="EMBL" id="AE017220">
    <property type="protein sequence ID" value="AAX65299.1"/>
    <property type="molecule type" value="Genomic_DNA"/>
</dbReference>
<dbReference type="RefSeq" id="WP_001539898.1">
    <property type="nucleotide sequence ID" value="NC_006905.1"/>
</dbReference>
<dbReference type="SMR" id="Q57PR2"/>
<dbReference type="KEGG" id="sec:SCH_1393"/>
<dbReference type="HOGENOM" id="CLU_003433_2_5_6"/>
<dbReference type="UniPathway" id="UPA00266"/>
<dbReference type="Proteomes" id="UP000000538">
    <property type="component" value="Chromosome"/>
</dbReference>
<dbReference type="GO" id="GO:0005737">
    <property type="term" value="C:cytoplasm"/>
    <property type="evidence" value="ECO:0007669"/>
    <property type="project" value="UniProtKB-SubCell"/>
</dbReference>
<dbReference type="GO" id="GO:0031071">
    <property type="term" value="F:cysteine desulfurase activity"/>
    <property type="evidence" value="ECO:0007669"/>
    <property type="project" value="UniProtKB-UniRule"/>
</dbReference>
<dbReference type="GO" id="GO:0030170">
    <property type="term" value="F:pyridoxal phosphate binding"/>
    <property type="evidence" value="ECO:0007669"/>
    <property type="project" value="InterPro"/>
</dbReference>
<dbReference type="GO" id="GO:0009000">
    <property type="term" value="F:selenocysteine lyase activity"/>
    <property type="evidence" value="ECO:0007669"/>
    <property type="project" value="UniProtKB-UniRule"/>
</dbReference>
<dbReference type="GO" id="GO:0006534">
    <property type="term" value="P:cysteine metabolic process"/>
    <property type="evidence" value="ECO:0007669"/>
    <property type="project" value="InterPro"/>
</dbReference>
<dbReference type="CDD" id="cd06453">
    <property type="entry name" value="SufS_like"/>
    <property type="match status" value="1"/>
</dbReference>
<dbReference type="FunFam" id="3.40.640.10:FF:000042">
    <property type="entry name" value="Cysteine desulfurase"/>
    <property type="match status" value="1"/>
</dbReference>
<dbReference type="Gene3D" id="3.90.1150.10">
    <property type="entry name" value="Aspartate Aminotransferase, domain 1"/>
    <property type="match status" value="1"/>
</dbReference>
<dbReference type="Gene3D" id="3.40.640.10">
    <property type="entry name" value="Type I PLP-dependent aspartate aminotransferase-like (Major domain)"/>
    <property type="match status" value="1"/>
</dbReference>
<dbReference type="HAMAP" id="MF_01831">
    <property type="entry name" value="SufS_aminotrans_5"/>
    <property type="match status" value="1"/>
</dbReference>
<dbReference type="InterPro" id="IPR000192">
    <property type="entry name" value="Aminotrans_V_dom"/>
</dbReference>
<dbReference type="InterPro" id="IPR020578">
    <property type="entry name" value="Aminotrans_V_PyrdxlP_BS"/>
</dbReference>
<dbReference type="InterPro" id="IPR010970">
    <property type="entry name" value="Cys_dSase_SufS"/>
</dbReference>
<dbReference type="InterPro" id="IPR015424">
    <property type="entry name" value="PyrdxlP-dep_Trfase"/>
</dbReference>
<dbReference type="InterPro" id="IPR015421">
    <property type="entry name" value="PyrdxlP-dep_Trfase_major"/>
</dbReference>
<dbReference type="InterPro" id="IPR015422">
    <property type="entry name" value="PyrdxlP-dep_Trfase_small"/>
</dbReference>
<dbReference type="NCBIfam" id="NF006791">
    <property type="entry name" value="PRK09295.1"/>
    <property type="match status" value="1"/>
</dbReference>
<dbReference type="NCBIfam" id="TIGR01979">
    <property type="entry name" value="sufS"/>
    <property type="match status" value="1"/>
</dbReference>
<dbReference type="PANTHER" id="PTHR43586">
    <property type="entry name" value="CYSTEINE DESULFURASE"/>
    <property type="match status" value="1"/>
</dbReference>
<dbReference type="PANTHER" id="PTHR43586:SF25">
    <property type="entry name" value="CYSTEINE DESULFURASE"/>
    <property type="match status" value="1"/>
</dbReference>
<dbReference type="Pfam" id="PF00266">
    <property type="entry name" value="Aminotran_5"/>
    <property type="match status" value="1"/>
</dbReference>
<dbReference type="SUPFAM" id="SSF53383">
    <property type="entry name" value="PLP-dependent transferases"/>
    <property type="match status" value="1"/>
</dbReference>
<dbReference type="PROSITE" id="PS00595">
    <property type="entry name" value="AA_TRANSFER_CLASS_5"/>
    <property type="match status" value="1"/>
</dbReference>
<feature type="chain" id="PRO_1000070428" description="Cysteine desulfurase">
    <location>
        <begin position="1"/>
        <end position="406"/>
    </location>
</feature>
<feature type="active site" description="Cysteine persulfide intermediate" evidence="1">
    <location>
        <position position="364"/>
    </location>
</feature>
<feature type="modified residue" description="N6-(pyridoxal phosphate)lysine" evidence="1">
    <location>
        <position position="226"/>
    </location>
</feature>
<evidence type="ECO:0000255" key="1">
    <source>
        <dbReference type="HAMAP-Rule" id="MF_01831"/>
    </source>
</evidence>
<comment type="function">
    <text evidence="1">Cysteine desulfurases mobilize the sulfur from L-cysteine to yield L-alanine, an essential step in sulfur metabolism for biosynthesis of a variety of sulfur-containing biomolecules. Component of the suf operon, which is activated and required under specific conditions such as oxidative stress and iron limitation. Acts as a potent selenocysteine lyase in vitro, that mobilizes selenium from L-selenocysteine. Selenocysteine lyase activity is however unsure in vivo.</text>
</comment>
<comment type="catalytic activity">
    <reaction evidence="1">
        <text>(sulfur carrier)-H + L-cysteine = (sulfur carrier)-SH + L-alanine</text>
        <dbReference type="Rhea" id="RHEA:43892"/>
        <dbReference type="Rhea" id="RHEA-COMP:14737"/>
        <dbReference type="Rhea" id="RHEA-COMP:14739"/>
        <dbReference type="ChEBI" id="CHEBI:29917"/>
        <dbReference type="ChEBI" id="CHEBI:35235"/>
        <dbReference type="ChEBI" id="CHEBI:57972"/>
        <dbReference type="ChEBI" id="CHEBI:64428"/>
        <dbReference type="EC" id="2.8.1.7"/>
    </reaction>
</comment>
<comment type="catalytic activity">
    <reaction evidence="1">
        <text>L-selenocysteine + AH2 = hydrogenselenide + L-alanine + A + H(+)</text>
        <dbReference type="Rhea" id="RHEA:11632"/>
        <dbReference type="ChEBI" id="CHEBI:13193"/>
        <dbReference type="ChEBI" id="CHEBI:15378"/>
        <dbReference type="ChEBI" id="CHEBI:17499"/>
        <dbReference type="ChEBI" id="CHEBI:29317"/>
        <dbReference type="ChEBI" id="CHEBI:57843"/>
        <dbReference type="ChEBI" id="CHEBI:57972"/>
        <dbReference type="EC" id="4.4.1.16"/>
    </reaction>
</comment>
<comment type="cofactor">
    <cofactor evidence="1">
        <name>pyridoxal 5'-phosphate</name>
        <dbReference type="ChEBI" id="CHEBI:597326"/>
    </cofactor>
</comment>
<comment type="pathway">
    <text evidence="1">Cofactor biosynthesis; iron-sulfur cluster biosynthesis.</text>
</comment>
<comment type="subunit">
    <text evidence="1">Homodimer. Interacts with SufE and the SufBCD complex composed of SufB, SufC and SufD. The interaction with SufE is required to mediate the direct transfer of the sulfur atom from the S-sulfanylcysteine.</text>
</comment>
<comment type="subcellular location">
    <subcellularLocation>
        <location evidence="1">Cytoplasm</location>
    </subcellularLocation>
</comment>
<comment type="similarity">
    <text evidence="1">Belongs to the class-V pyridoxal-phosphate-dependent aminotransferase family. Csd subfamily.</text>
</comment>
<organism>
    <name type="scientific">Salmonella choleraesuis (strain SC-B67)</name>
    <dbReference type="NCBI Taxonomy" id="321314"/>
    <lineage>
        <taxon>Bacteria</taxon>
        <taxon>Pseudomonadati</taxon>
        <taxon>Pseudomonadota</taxon>
        <taxon>Gammaproteobacteria</taxon>
        <taxon>Enterobacterales</taxon>
        <taxon>Enterobacteriaceae</taxon>
        <taxon>Salmonella</taxon>
    </lineage>
</organism>
<keyword id="KW-0963">Cytoplasm</keyword>
<keyword id="KW-0456">Lyase</keyword>
<keyword id="KW-0663">Pyridoxal phosphate</keyword>
<keyword id="KW-0808">Transferase</keyword>
<name>SUFS_SALCH</name>